<gene>
    <name evidence="1" type="primary">clpP</name>
</gene>
<dbReference type="EC" id="3.4.21.92" evidence="1"/>
<dbReference type="EMBL" id="AP009123">
    <property type="protein sequence ID" value="BAF41272.1"/>
    <property type="molecule type" value="Genomic_DNA"/>
</dbReference>
<dbReference type="RefSeq" id="YP_913212.1">
    <property type="nucleotide sequence ID" value="NC_008641.1"/>
</dbReference>
<dbReference type="SMR" id="A0ZZ60"/>
<dbReference type="MEROPS" id="S14.002"/>
<dbReference type="GeneID" id="4575191"/>
<dbReference type="GO" id="GO:0009570">
    <property type="term" value="C:chloroplast stroma"/>
    <property type="evidence" value="ECO:0007669"/>
    <property type="project" value="UniProtKB-SubCell"/>
</dbReference>
<dbReference type="GO" id="GO:0009368">
    <property type="term" value="C:endopeptidase Clp complex"/>
    <property type="evidence" value="ECO:0007669"/>
    <property type="project" value="TreeGrafter"/>
</dbReference>
<dbReference type="GO" id="GO:0004176">
    <property type="term" value="F:ATP-dependent peptidase activity"/>
    <property type="evidence" value="ECO:0007669"/>
    <property type="project" value="InterPro"/>
</dbReference>
<dbReference type="GO" id="GO:0051117">
    <property type="term" value="F:ATPase binding"/>
    <property type="evidence" value="ECO:0007669"/>
    <property type="project" value="TreeGrafter"/>
</dbReference>
<dbReference type="GO" id="GO:0004252">
    <property type="term" value="F:serine-type endopeptidase activity"/>
    <property type="evidence" value="ECO:0007669"/>
    <property type="project" value="UniProtKB-UniRule"/>
</dbReference>
<dbReference type="GO" id="GO:0006515">
    <property type="term" value="P:protein quality control for misfolded or incompletely synthesized proteins"/>
    <property type="evidence" value="ECO:0007669"/>
    <property type="project" value="TreeGrafter"/>
</dbReference>
<dbReference type="CDD" id="cd07017">
    <property type="entry name" value="S14_ClpP_2"/>
    <property type="match status" value="1"/>
</dbReference>
<dbReference type="FunFam" id="3.90.226.10:FF:000006">
    <property type="entry name" value="ATP-dependent Clp protease proteolytic subunit"/>
    <property type="match status" value="1"/>
</dbReference>
<dbReference type="Gene3D" id="3.90.226.10">
    <property type="entry name" value="2-enoyl-CoA Hydratase, Chain A, domain 1"/>
    <property type="match status" value="1"/>
</dbReference>
<dbReference type="HAMAP" id="MF_00444">
    <property type="entry name" value="ClpP"/>
    <property type="match status" value="1"/>
</dbReference>
<dbReference type="InterPro" id="IPR001907">
    <property type="entry name" value="ClpP"/>
</dbReference>
<dbReference type="InterPro" id="IPR029045">
    <property type="entry name" value="ClpP/crotonase-like_dom_sf"/>
</dbReference>
<dbReference type="InterPro" id="IPR023562">
    <property type="entry name" value="ClpP/TepA"/>
</dbReference>
<dbReference type="InterPro" id="IPR033135">
    <property type="entry name" value="ClpP_His_AS"/>
</dbReference>
<dbReference type="InterPro" id="IPR018215">
    <property type="entry name" value="ClpP_Ser_AS"/>
</dbReference>
<dbReference type="PANTHER" id="PTHR10381">
    <property type="entry name" value="ATP-DEPENDENT CLP PROTEASE PROTEOLYTIC SUBUNIT"/>
    <property type="match status" value="1"/>
</dbReference>
<dbReference type="PANTHER" id="PTHR10381:SF15">
    <property type="entry name" value="CHLOROPLASTIC ATP-DEPENDENT CLP PROTEASE PROTEOLYTIC SUBUNIT 1"/>
    <property type="match status" value="1"/>
</dbReference>
<dbReference type="Pfam" id="PF00574">
    <property type="entry name" value="CLP_protease"/>
    <property type="match status" value="1"/>
</dbReference>
<dbReference type="PRINTS" id="PR00127">
    <property type="entry name" value="CLPPROTEASEP"/>
</dbReference>
<dbReference type="SUPFAM" id="SSF52096">
    <property type="entry name" value="ClpP/crotonase"/>
    <property type="match status" value="1"/>
</dbReference>
<dbReference type="PROSITE" id="PS00382">
    <property type="entry name" value="CLP_PROTEASE_HIS"/>
    <property type="match status" value="1"/>
</dbReference>
<dbReference type="PROSITE" id="PS00381">
    <property type="entry name" value="CLP_PROTEASE_SER"/>
    <property type="match status" value="1"/>
</dbReference>
<protein>
    <recommendedName>
        <fullName evidence="1">ATP-dependent Clp protease proteolytic subunit</fullName>
        <ecNumber evidence="1">3.4.21.92</ecNumber>
    </recommendedName>
    <alternativeName>
        <fullName evidence="1">Endopeptidase Clp</fullName>
    </alternativeName>
</protein>
<keyword id="KW-0150">Chloroplast</keyword>
<keyword id="KW-0378">Hydrolase</keyword>
<keyword id="KW-0934">Plastid</keyword>
<keyword id="KW-0645">Protease</keyword>
<keyword id="KW-0720">Serine protease</keyword>
<accession>A0ZZ60</accession>
<evidence type="ECO:0000255" key="1">
    <source>
        <dbReference type="HAMAP-Rule" id="MF_00444"/>
    </source>
</evidence>
<reference key="1">
    <citation type="journal article" date="2006" name="Genes Genet. Syst.">
        <title>Complete nucleotide sequence of the cotton (Gossypium barbadense L.) chloroplast genome with a comparative analysis of sequences among 9 dicot plants.</title>
        <authorList>
            <person name="Ibrahim R.I.H."/>
            <person name="Azuma J."/>
            <person name="Sakamoto M."/>
        </authorList>
    </citation>
    <scope>NUCLEOTIDE SEQUENCE [LARGE SCALE GENOMIC DNA]</scope>
</reference>
<organism>
    <name type="scientific">Gossypium barbadense</name>
    <name type="common">Sea Island cotton</name>
    <name type="synonym">Hibiscus barbadensis</name>
    <dbReference type="NCBI Taxonomy" id="3634"/>
    <lineage>
        <taxon>Eukaryota</taxon>
        <taxon>Viridiplantae</taxon>
        <taxon>Streptophyta</taxon>
        <taxon>Embryophyta</taxon>
        <taxon>Tracheophyta</taxon>
        <taxon>Spermatophyta</taxon>
        <taxon>Magnoliopsida</taxon>
        <taxon>eudicotyledons</taxon>
        <taxon>Gunneridae</taxon>
        <taxon>Pentapetalae</taxon>
        <taxon>rosids</taxon>
        <taxon>malvids</taxon>
        <taxon>Malvales</taxon>
        <taxon>Malvaceae</taxon>
        <taxon>Malvoideae</taxon>
        <taxon>Gossypium</taxon>
    </lineage>
</organism>
<proteinExistence type="inferred from homology"/>
<geneLocation type="chloroplast"/>
<feature type="chain" id="PRO_0000275286" description="ATP-dependent Clp protease proteolytic subunit">
    <location>
        <begin position="1"/>
        <end position="196"/>
    </location>
</feature>
<feature type="active site" description="Nucleophile" evidence="1">
    <location>
        <position position="101"/>
    </location>
</feature>
<feature type="active site" evidence="1">
    <location>
        <position position="126"/>
    </location>
</feature>
<comment type="function">
    <text evidence="1">Cleaves peptides in various proteins in a process that requires ATP hydrolysis. Has a chymotrypsin-like activity. Plays a major role in the degradation of misfolded proteins.</text>
</comment>
<comment type="catalytic activity">
    <reaction evidence="1">
        <text>Hydrolysis of proteins to small peptides in the presence of ATP and magnesium. alpha-casein is the usual test substrate. In the absence of ATP, only oligopeptides shorter than five residues are hydrolyzed (such as succinyl-Leu-Tyr-|-NHMec, and Leu-Tyr-Leu-|-Tyr-Trp, in which cleavage of the -Tyr-|-Leu- and -Tyr-|-Trp bonds also occurs).</text>
        <dbReference type="EC" id="3.4.21.92"/>
    </reaction>
</comment>
<comment type="subunit">
    <text>Component of the chloroplastic Clp protease core complex.</text>
</comment>
<comment type="subcellular location">
    <subcellularLocation>
        <location evidence="1">Plastid</location>
        <location evidence="1">Chloroplast stroma</location>
    </subcellularLocation>
</comment>
<comment type="similarity">
    <text evidence="1">Belongs to the peptidase S14 family.</text>
</comment>
<sequence length="196" mass="22022">MPIGVPKVPFRNPGEEDAVWVDVYNRLYRERLLFLGQEVDSEISNQLIGLMVYLSIENDTKDLYLFINSPGGWVIPGVAIYDTMQFVQPDVHTICMGLAASMGSFLLAGGEITKRLAFPHARVMIHQPASSFYEAQTGEFILEAEELLKLRESLTRVYVQRTGKPLWVVSEDMERNVFMSATEAQAHGIVDLVAVK</sequence>
<name>CLPP_GOSBA</name>